<reference key="1">
    <citation type="journal article" date="2002" name="Proc. Natl. Acad. Sci. U.S.A.">
        <title>Extensive mosaic structure revealed by the complete genome sequence of uropathogenic Escherichia coli.</title>
        <authorList>
            <person name="Welch R.A."/>
            <person name="Burland V."/>
            <person name="Plunkett G. III"/>
            <person name="Redford P."/>
            <person name="Roesch P."/>
            <person name="Rasko D."/>
            <person name="Buckles E.L."/>
            <person name="Liou S.-R."/>
            <person name="Boutin A."/>
            <person name="Hackett J."/>
            <person name="Stroud D."/>
            <person name="Mayhew G.F."/>
            <person name="Rose D.J."/>
            <person name="Zhou S."/>
            <person name="Schwartz D.C."/>
            <person name="Perna N.T."/>
            <person name="Mobley H.L.T."/>
            <person name="Donnenberg M.S."/>
            <person name="Blattner F.R."/>
        </authorList>
    </citation>
    <scope>NUCLEOTIDE SEQUENCE [LARGE SCALE GENOMIC DNA]</scope>
    <source>
        <strain>CFT073 / ATCC 700928 / UPEC</strain>
    </source>
</reference>
<accession>Q8FKD5</accession>
<protein>
    <recommendedName>
        <fullName evidence="1">Recombination-associated protein RdgC</fullName>
    </recommendedName>
</protein>
<evidence type="ECO:0000255" key="1">
    <source>
        <dbReference type="HAMAP-Rule" id="MF_00194"/>
    </source>
</evidence>
<evidence type="ECO:0000305" key="2"/>
<organism>
    <name type="scientific">Escherichia coli O6:H1 (strain CFT073 / ATCC 700928 / UPEC)</name>
    <dbReference type="NCBI Taxonomy" id="199310"/>
    <lineage>
        <taxon>Bacteria</taxon>
        <taxon>Pseudomonadati</taxon>
        <taxon>Pseudomonadota</taxon>
        <taxon>Gammaproteobacteria</taxon>
        <taxon>Enterobacterales</taxon>
        <taxon>Enterobacteriaceae</taxon>
        <taxon>Escherichia</taxon>
    </lineage>
</organism>
<feature type="chain" id="PRO_0000211738" description="Recombination-associated protein RdgC">
    <location>
        <begin position="1"/>
        <end position="303"/>
    </location>
</feature>
<comment type="function">
    <text evidence="1">May be involved in recombination.</text>
</comment>
<comment type="subcellular location">
    <subcellularLocation>
        <location evidence="1">Cytoplasm</location>
        <location evidence="1">Nucleoid</location>
    </subcellularLocation>
</comment>
<comment type="similarity">
    <text evidence="1">Belongs to the RdgC family.</text>
</comment>
<comment type="sequence caution" evidence="2">
    <conflict type="erroneous initiation">
        <sequence resource="EMBL-CDS" id="AAN78980"/>
    </conflict>
</comment>
<sequence length="303" mass="34023">MLWFKNLMVYRLSREISLRAEEMEKQLASMAFTPCGSQDMAKMGWVPPMGSHSDALTHVANGQIVICARKEEKILPSPVIKQALEAKIAKLEAEQARKLKKTEKDSLKDEVLHSLLPRAFSRFSQTMMWIDTVNGLIMVDCASAKKAEDTLALLRKSLGSLPVVPLSMENPIELTLTEWVRSGSTAQGFQLLDEAELKSLLEDGGVIRAKKQDLTSEEITNHIEAGKVVTKLALDWQQRIQFVMCDDGSLKRLKFCDELRDQNEDIDREDFAQRFDADFILMTGELAALIQNLIEGLGGEAQR</sequence>
<dbReference type="EMBL" id="AE014075">
    <property type="protein sequence ID" value="AAN78980.1"/>
    <property type="status" value="ALT_INIT"/>
    <property type="molecule type" value="Genomic_DNA"/>
</dbReference>
<dbReference type="RefSeq" id="WP_001366457.1">
    <property type="nucleotide sequence ID" value="NZ_CP051263.1"/>
</dbReference>
<dbReference type="SMR" id="Q8FKD5"/>
<dbReference type="STRING" id="199310.c0502"/>
<dbReference type="KEGG" id="ecc:c0502"/>
<dbReference type="eggNOG" id="COG2974">
    <property type="taxonomic scope" value="Bacteria"/>
</dbReference>
<dbReference type="HOGENOM" id="CLU_052038_1_1_6"/>
<dbReference type="Proteomes" id="UP000001410">
    <property type="component" value="Chromosome"/>
</dbReference>
<dbReference type="GO" id="GO:0043590">
    <property type="term" value="C:bacterial nucleoid"/>
    <property type="evidence" value="ECO:0007669"/>
    <property type="project" value="TreeGrafter"/>
</dbReference>
<dbReference type="GO" id="GO:0005737">
    <property type="term" value="C:cytoplasm"/>
    <property type="evidence" value="ECO:0007669"/>
    <property type="project" value="UniProtKB-UniRule"/>
</dbReference>
<dbReference type="GO" id="GO:0003690">
    <property type="term" value="F:double-stranded DNA binding"/>
    <property type="evidence" value="ECO:0007669"/>
    <property type="project" value="TreeGrafter"/>
</dbReference>
<dbReference type="GO" id="GO:0006310">
    <property type="term" value="P:DNA recombination"/>
    <property type="evidence" value="ECO:0007669"/>
    <property type="project" value="UniProtKB-UniRule"/>
</dbReference>
<dbReference type="GO" id="GO:0000018">
    <property type="term" value="P:regulation of DNA recombination"/>
    <property type="evidence" value="ECO:0007669"/>
    <property type="project" value="TreeGrafter"/>
</dbReference>
<dbReference type="HAMAP" id="MF_00194">
    <property type="entry name" value="RdgC"/>
    <property type="match status" value="1"/>
</dbReference>
<dbReference type="InterPro" id="IPR007476">
    <property type="entry name" value="RdgC"/>
</dbReference>
<dbReference type="NCBIfam" id="NF001460">
    <property type="entry name" value="PRK00321.1-1"/>
    <property type="match status" value="1"/>
</dbReference>
<dbReference type="NCBIfam" id="NF001462">
    <property type="entry name" value="PRK00321.1-3"/>
    <property type="match status" value="1"/>
</dbReference>
<dbReference type="NCBIfam" id="NF001464">
    <property type="entry name" value="PRK00321.1-5"/>
    <property type="match status" value="1"/>
</dbReference>
<dbReference type="PANTHER" id="PTHR38103">
    <property type="entry name" value="RECOMBINATION-ASSOCIATED PROTEIN RDGC"/>
    <property type="match status" value="1"/>
</dbReference>
<dbReference type="PANTHER" id="PTHR38103:SF1">
    <property type="entry name" value="RECOMBINATION-ASSOCIATED PROTEIN RDGC"/>
    <property type="match status" value="1"/>
</dbReference>
<dbReference type="Pfam" id="PF04381">
    <property type="entry name" value="RdgC"/>
    <property type="match status" value="1"/>
</dbReference>
<proteinExistence type="inferred from homology"/>
<gene>
    <name evidence="1" type="primary">rdgC</name>
    <name type="ordered locus">c0502</name>
</gene>
<keyword id="KW-0963">Cytoplasm</keyword>
<keyword id="KW-0233">DNA recombination</keyword>
<keyword id="KW-1185">Reference proteome</keyword>
<name>RDGC_ECOL6</name>